<sequence>MRAFVLRARSAPTDSQLFLASVGQEPHTEILAHTLMNTIFVAQSHRNDVVVYLVLESTHDFSRTICFDTRNICHIGGFHEQALLTKIAKALDISRGMTKEQTRVVDEGITVSTISFEKLVQDLAVDYQLFMMDKKGTSIREQEFVGNPCFLLTDHIPMPKKSFNTLKRLGAQKISLGPKMLFASQCVVLIHNELDINQ</sequence>
<accession>A6WPD0</accession>
<protein>
    <recommendedName>
        <fullName evidence="1">Putative pseudouridine methyltransferase</fullName>
        <ecNumber evidence="1">2.1.1.-</ecNumber>
    </recommendedName>
</protein>
<reference key="1">
    <citation type="submission" date="2007-07" db="EMBL/GenBank/DDBJ databases">
        <title>Complete sequence of chromosome of Shewanella baltica OS185.</title>
        <authorList>
            <consortium name="US DOE Joint Genome Institute"/>
            <person name="Copeland A."/>
            <person name="Lucas S."/>
            <person name="Lapidus A."/>
            <person name="Barry K."/>
            <person name="Glavina del Rio T."/>
            <person name="Dalin E."/>
            <person name="Tice H."/>
            <person name="Pitluck S."/>
            <person name="Sims D."/>
            <person name="Brettin T."/>
            <person name="Bruce D."/>
            <person name="Detter J.C."/>
            <person name="Han C."/>
            <person name="Schmutz J."/>
            <person name="Larimer F."/>
            <person name="Land M."/>
            <person name="Hauser L."/>
            <person name="Kyrpides N."/>
            <person name="Mikhailova N."/>
            <person name="Brettar I."/>
            <person name="Rodrigues J."/>
            <person name="Konstantinidis K."/>
            <person name="Tiedje J."/>
            <person name="Richardson P."/>
        </authorList>
    </citation>
    <scope>NUCLEOTIDE SEQUENCE [LARGE SCALE GENOMIC DNA]</scope>
    <source>
        <strain>OS185</strain>
    </source>
</reference>
<comment type="subcellular location">
    <subcellularLocation>
        <location evidence="1">Cytoplasm</location>
    </subcellularLocation>
</comment>
<comment type="similarity">
    <text evidence="1">Belongs to the methyltransferase superfamily. TrmY family.</text>
</comment>
<dbReference type="EC" id="2.1.1.-" evidence="1"/>
<dbReference type="EMBL" id="CP000753">
    <property type="protein sequence ID" value="ABS08669.1"/>
    <property type="molecule type" value="Genomic_DNA"/>
</dbReference>
<dbReference type="RefSeq" id="WP_012089427.1">
    <property type="nucleotide sequence ID" value="NC_009665.1"/>
</dbReference>
<dbReference type="SMR" id="A6WPD0"/>
<dbReference type="KEGG" id="sbm:Shew185_2532"/>
<dbReference type="HOGENOM" id="CLU_107018_0_0_6"/>
<dbReference type="GO" id="GO:0005737">
    <property type="term" value="C:cytoplasm"/>
    <property type="evidence" value="ECO:0007669"/>
    <property type="project" value="UniProtKB-SubCell"/>
</dbReference>
<dbReference type="GO" id="GO:0008757">
    <property type="term" value="F:S-adenosylmethionine-dependent methyltransferase activity"/>
    <property type="evidence" value="ECO:0007669"/>
    <property type="project" value="UniProtKB-UniRule"/>
</dbReference>
<dbReference type="GO" id="GO:0008175">
    <property type="term" value="F:tRNA methyltransferase activity"/>
    <property type="evidence" value="ECO:0007669"/>
    <property type="project" value="InterPro"/>
</dbReference>
<dbReference type="GO" id="GO:0030488">
    <property type="term" value="P:tRNA methylation"/>
    <property type="evidence" value="ECO:0007669"/>
    <property type="project" value="TreeGrafter"/>
</dbReference>
<dbReference type="CDD" id="cd18087">
    <property type="entry name" value="TrmY-like"/>
    <property type="match status" value="1"/>
</dbReference>
<dbReference type="Gene3D" id="3.40.1280.10">
    <property type="match status" value="1"/>
</dbReference>
<dbReference type="HAMAP" id="MF_00587">
    <property type="entry name" value="tRNA_methyltr_TrmY"/>
    <property type="match status" value="1"/>
</dbReference>
<dbReference type="InterPro" id="IPR029028">
    <property type="entry name" value="Alpha/beta_knot_MTases"/>
</dbReference>
<dbReference type="InterPro" id="IPR007158">
    <property type="entry name" value="TrmY"/>
</dbReference>
<dbReference type="InterPro" id="IPR029026">
    <property type="entry name" value="tRNA_m1G_MTases_N"/>
</dbReference>
<dbReference type="NCBIfam" id="NF002560">
    <property type="entry name" value="PRK02135.1"/>
    <property type="match status" value="1"/>
</dbReference>
<dbReference type="PANTHER" id="PTHR40703">
    <property type="entry name" value="TRNA (PSEUDOURIDINE(54)-N(1))-METHYLTRANSFERASE"/>
    <property type="match status" value="1"/>
</dbReference>
<dbReference type="PANTHER" id="PTHR40703:SF1">
    <property type="entry name" value="TRNA (PSEUDOURIDINE(54)-N(1))-METHYLTRANSFERASE"/>
    <property type="match status" value="1"/>
</dbReference>
<dbReference type="Pfam" id="PF04013">
    <property type="entry name" value="Methyltrn_RNA_2"/>
    <property type="match status" value="1"/>
</dbReference>
<dbReference type="SUPFAM" id="SSF75217">
    <property type="entry name" value="alpha/beta knot"/>
    <property type="match status" value="1"/>
</dbReference>
<evidence type="ECO:0000255" key="1">
    <source>
        <dbReference type="HAMAP-Rule" id="MF_00587"/>
    </source>
</evidence>
<keyword id="KW-0963">Cytoplasm</keyword>
<keyword id="KW-0489">Methyltransferase</keyword>
<keyword id="KW-0949">S-adenosyl-L-methionine</keyword>
<keyword id="KW-0808">Transferase</keyword>
<name>TRMYL_SHEB8</name>
<organism>
    <name type="scientific">Shewanella baltica (strain OS185)</name>
    <dbReference type="NCBI Taxonomy" id="402882"/>
    <lineage>
        <taxon>Bacteria</taxon>
        <taxon>Pseudomonadati</taxon>
        <taxon>Pseudomonadota</taxon>
        <taxon>Gammaproteobacteria</taxon>
        <taxon>Alteromonadales</taxon>
        <taxon>Shewanellaceae</taxon>
        <taxon>Shewanella</taxon>
    </lineage>
</organism>
<feature type="chain" id="PRO_1000129784" description="Putative pseudouridine methyltransferase">
    <location>
        <begin position="1"/>
        <end position="198"/>
    </location>
</feature>
<feature type="binding site" evidence="1">
    <location>
        <position position="132"/>
    </location>
    <ligand>
        <name>S-adenosyl-L-methionine</name>
        <dbReference type="ChEBI" id="CHEBI:59789"/>
    </ligand>
</feature>
<feature type="binding site" evidence="1">
    <location>
        <position position="186"/>
    </location>
    <ligand>
        <name>S-adenosyl-L-methionine</name>
        <dbReference type="ChEBI" id="CHEBI:59789"/>
    </ligand>
</feature>
<gene>
    <name type="ordered locus">Shew185_2532</name>
</gene>
<proteinExistence type="inferred from homology"/>